<name>RS3_CHLTR</name>
<proteinExistence type="inferred from homology"/>
<evidence type="ECO:0000255" key="1">
    <source>
        <dbReference type="HAMAP-Rule" id="MF_01309"/>
    </source>
</evidence>
<evidence type="ECO:0000305" key="2"/>
<organism>
    <name type="scientific">Chlamydia trachomatis serovar D (strain ATCC VR-885 / DSM 19411 / UW-3/Cx)</name>
    <dbReference type="NCBI Taxonomy" id="272561"/>
    <lineage>
        <taxon>Bacteria</taxon>
        <taxon>Pseudomonadati</taxon>
        <taxon>Chlamydiota</taxon>
        <taxon>Chlamydiia</taxon>
        <taxon>Chlamydiales</taxon>
        <taxon>Chlamydiaceae</taxon>
        <taxon>Chlamydia/Chlamydophila group</taxon>
        <taxon>Chlamydia</taxon>
    </lineage>
</organism>
<sequence>MGQKGCPIGFRTAVTKKWRSLWYGNNQEFGKFLIEDVKIREFLKKKPSCQGAAGFVVKRMSGKIEVTIHTARPGLVIGKKGAEVESLKAELKKLTDKDVWVEIAEVKRPELNAQLVADGIAKQIERRVSFRRAMKKALQSVMDAGALGVKVQVSGRLAGAEIARSEWYKNGRVPLHTLRADIDYATASAETTYGIIGIKVWINLGEKKAVPAANHAGAASTAAA</sequence>
<gene>
    <name evidence="1" type="primary">rpsC</name>
    <name type="synonym">rs3</name>
    <name type="ordered locus">CT_522</name>
</gene>
<reference key="1">
    <citation type="journal article" date="1998" name="Science">
        <title>Genome sequence of an obligate intracellular pathogen of humans: Chlamydia trachomatis.</title>
        <authorList>
            <person name="Stephens R.S."/>
            <person name="Kalman S."/>
            <person name="Lammel C.J."/>
            <person name="Fan J."/>
            <person name="Marathe R."/>
            <person name="Aravind L."/>
            <person name="Mitchell W.P."/>
            <person name="Olinger L."/>
            <person name="Tatusov R.L."/>
            <person name="Zhao Q."/>
            <person name="Koonin E.V."/>
            <person name="Davis R.W."/>
        </authorList>
    </citation>
    <scope>NUCLEOTIDE SEQUENCE [LARGE SCALE GENOMIC DNA]</scope>
    <source>
        <strain>ATCC VR-885 / DSM 19411 / UW-3/Cx</strain>
    </source>
</reference>
<protein>
    <recommendedName>
        <fullName evidence="1">Small ribosomal subunit protein uS3</fullName>
    </recommendedName>
    <alternativeName>
        <fullName evidence="2">30S ribosomal protein S3</fullName>
    </alternativeName>
</protein>
<feature type="chain" id="PRO_0000130101" description="Small ribosomal subunit protein uS3">
    <location>
        <begin position="1"/>
        <end position="224"/>
    </location>
</feature>
<feature type="domain" description="KH type-2" evidence="1">
    <location>
        <begin position="39"/>
        <end position="107"/>
    </location>
</feature>
<keyword id="KW-1185">Reference proteome</keyword>
<keyword id="KW-0687">Ribonucleoprotein</keyword>
<keyword id="KW-0689">Ribosomal protein</keyword>
<keyword id="KW-0694">RNA-binding</keyword>
<keyword id="KW-0699">rRNA-binding</keyword>
<comment type="function">
    <text evidence="1">Binds the lower part of the 30S subunit head. Binds mRNA in the 70S ribosome, positioning it for translation.</text>
</comment>
<comment type="subunit">
    <text evidence="1">Part of the 30S ribosomal subunit. Forms a tight complex with proteins S10 and S14.</text>
</comment>
<comment type="similarity">
    <text evidence="1">Belongs to the universal ribosomal protein uS3 family.</text>
</comment>
<dbReference type="EMBL" id="AE001273">
    <property type="protein sequence ID" value="AAC68123.1"/>
    <property type="molecule type" value="Genomic_DNA"/>
</dbReference>
<dbReference type="PIR" id="H71506">
    <property type="entry name" value="H71506"/>
</dbReference>
<dbReference type="RefSeq" id="NP_220037.1">
    <property type="nucleotide sequence ID" value="NC_000117.1"/>
</dbReference>
<dbReference type="RefSeq" id="WP_010725237.1">
    <property type="nucleotide sequence ID" value="NC_000117.1"/>
</dbReference>
<dbReference type="SMR" id="O84527"/>
<dbReference type="FunCoup" id="O84527">
    <property type="interactions" value="297"/>
</dbReference>
<dbReference type="STRING" id="272561.CT_522"/>
<dbReference type="EnsemblBacteria" id="AAC68123">
    <property type="protein sequence ID" value="AAC68123"/>
    <property type="gene ID" value="CT_522"/>
</dbReference>
<dbReference type="GeneID" id="884299"/>
<dbReference type="KEGG" id="ctr:CT_522"/>
<dbReference type="PATRIC" id="fig|272561.5.peg.566"/>
<dbReference type="HOGENOM" id="CLU_058591_0_2_0"/>
<dbReference type="InParanoid" id="O84527"/>
<dbReference type="OrthoDB" id="9806396at2"/>
<dbReference type="Proteomes" id="UP000000431">
    <property type="component" value="Chromosome"/>
</dbReference>
<dbReference type="GO" id="GO:0022627">
    <property type="term" value="C:cytosolic small ribosomal subunit"/>
    <property type="evidence" value="ECO:0000318"/>
    <property type="project" value="GO_Central"/>
</dbReference>
<dbReference type="GO" id="GO:0003729">
    <property type="term" value="F:mRNA binding"/>
    <property type="evidence" value="ECO:0007669"/>
    <property type="project" value="UniProtKB-UniRule"/>
</dbReference>
<dbReference type="GO" id="GO:0019843">
    <property type="term" value="F:rRNA binding"/>
    <property type="evidence" value="ECO:0007669"/>
    <property type="project" value="UniProtKB-UniRule"/>
</dbReference>
<dbReference type="GO" id="GO:0003735">
    <property type="term" value="F:structural constituent of ribosome"/>
    <property type="evidence" value="ECO:0000318"/>
    <property type="project" value="GO_Central"/>
</dbReference>
<dbReference type="GO" id="GO:0006412">
    <property type="term" value="P:translation"/>
    <property type="evidence" value="ECO:0007669"/>
    <property type="project" value="UniProtKB-UniRule"/>
</dbReference>
<dbReference type="CDD" id="cd02412">
    <property type="entry name" value="KH-II_30S_S3"/>
    <property type="match status" value="1"/>
</dbReference>
<dbReference type="FunFam" id="3.30.300.20:FF:000001">
    <property type="entry name" value="30S ribosomal protein S3"/>
    <property type="match status" value="1"/>
</dbReference>
<dbReference type="Gene3D" id="3.30.300.20">
    <property type="match status" value="1"/>
</dbReference>
<dbReference type="Gene3D" id="3.30.1140.32">
    <property type="entry name" value="Ribosomal protein S3, C-terminal domain"/>
    <property type="match status" value="1"/>
</dbReference>
<dbReference type="HAMAP" id="MF_01309_B">
    <property type="entry name" value="Ribosomal_uS3_B"/>
    <property type="match status" value="1"/>
</dbReference>
<dbReference type="InterPro" id="IPR004087">
    <property type="entry name" value="KH_dom"/>
</dbReference>
<dbReference type="InterPro" id="IPR015946">
    <property type="entry name" value="KH_dom-like_a/b"/>
</dbReference>
<dbReference type="InterPro" id="IPR004044">
    <property type="entry name" value="KH_dom_type_2"/>
</dbReference>
<dbReference type="InterPro" id="IPR009019">
    <property type="entry name" value="KH_sf_prok-type"/>
</dbReference>
<dbReference type="InterPro" id="IPR036419">
    <property type="entry name" value="Ribosomal_S3_C_sf"/>
</dbReference>
<dbReference type="InterPro" id="IPR005704">
    <property type="entry name" value="Ribosomal_uS3_bac-typ"/>
</dbReference>
<dbReference type="InterPro" id="IPR001351">
    <property type="entry name" value="Ribosomal_uS3_C"/>
</dbReference>
<dbReference type="InterPro" id="IPR018280">
    <property type="entry name" value="Ribosomal_uS3_CS"/>
</dbReference>
<dbReference type="NCBIfam" id="TIGR01009">
    <property type="entry name" value="rpsC_bact"/>
    <property type="match status" value="1"/>
</dbReference>
<dbReference type="PANTHER" id="PTHR11760">
    <property type="entry name" value="30S/40S RIBOSOMAL PROTEIN S3"/>
    <property type="match status" value="1"/>
</dbReference>
<dbReference type="PANTHER" id="PTHR11760:SF19">
    <property type="entry name" value="SMALL RIBOSOMAL SUBUNIT PROTEIN US3C"/>
    <property type="match status" value="1"/>
</dbReference>
<dbReference type="Pfam" id="PF07650">
    <property type="entry name" value="KH_2"/>
    <property type="match status" value="1"/>
</dbReference>
<dbReference type="Pfam" id="PF00189">
    <property type="entry name" value="Ribosomal_S3_C"/>
    <property type="match status" value="1"/>
</dbReference>
<dbReference type="SMART" id="SM00322">
    <property type="entry name" value="KH"/>
    <property type="match status" value="1"/>
</dbReference>
<dbReference type="SUPFAM" id="SSF54814">
    <property type="entry name" value="Prokaryotic type KH domain (KH-domain type II)"/>
    <property type="match status" value="1"/>
</dbReference>
<dbReference type="SUPFAM" id="SSF54821">
    <property type="entry name" value="Ribosomal protein S3 C-terminal domain"/>
    <property type="match status" value="1"/>
</dbReference>
<dbReference type="PROSITE" id="PS50823">
    <property type="entry name" value="KH_TYPE_2"/>
    <property type="match status" value="1"/>
</dbReference>
<dbReference type="PROSITE" id="PS00548">
    <property type="entry name" value="RIBOSOMAL_S3"/>
    <property type="match status" value="1"/>
</dbReference>
<accession>O84527</accession>